<proteinExistence type="inferred from homology"/>
<sequence length="156" mass="17124">MRNPAKQEDLIKAFKALLKEEKFSSQGEIVLALQEEGFENINQSKVSRMLTKFGAVRTRNAKMEMVYCLPAELGVPTTSSPLKNLVLDVDYNDSVVVINTSPGAAQLIARLLDSLGKAEGILGSIAGDDTIFTTPARGFTVKQLHEAILRLFEQEL</sequence>
<feature type="chain" id="PRO_0000205143" description="Arginine repressor">
    <location>
        <begin position="1"/>
        <end position="156"/>
    </location>
</feature>
<evidence type="ECO:0000255" key="1">
    <source>
        <dbReference type="HAMAP-Rule" id="MF_00173"/>
    </source>
</evidence>
<dbReference type="EMBL" id="AL590842">
    <property type="protein sequence ID" value="CAL22105.1"/>
    <property type="molecule type" value="Genomic_DNA"/>
</dbReference>
<dbReference type="EMBL" id="AE009952">
    <property type="protein sequence ID" value="AAM84255.1"/>
    <property type="molecule type" value="Genomic_DNA"/>
</dbReference>
<dbReference type="EMBL" id="AE017042">
    <property type="protein sequence ID" value="AAS60836.1"/>
    <property type="molecule type" value="Genomic_DNA"/>
</dbReference>
<dbReference type="PIR" id="AF0427">
    <property type="entry name" value="AF0427"/>
</dbReference>
<dbReference type="RefSeq" id="WP_002210173.1">
    <property type="nucleotide sequence ID" value="NZ_WUCM01000036.1"/>
</dbReference>
<dbReference type="RefSeq" id="YP_002348406.1">
    <property type="nucleotide sequence ID" value="NC_003143.1"/>
</dbReference>
<dbReference type="SMR" id="Q8ZBA2"/>
<dbReference type="STRING" id="214092.YPO3517"/>
<dbReference type="PaxDb" id="214092-YPO3517"/>
<dbReference type="DNASU" id="1145614"/>
<dbReference type="EnsemblBacteria" id="AAS60836">
    <property type="protein sequence ID" value="AAS60836"/>
    <property type="gene ID" value="YP_0566"/>
</dbReference>
<dbReference type="GeneID" id="57975197"/>
<dbReference type="KEGG" id="ype:YPO3517"/>
<dbReference type="KEGG" id="ypk:y0667"/>
<dbReference type="KEGG" id="ypm:YP_0566"/>
<dbReference type="PATRIC" id="fig|214092.21.peg.4011"/>
<dbReference type="eggNOG" id="COG1438">
    <property type="taxonomic scope" value="Bacteria"/>
</dbReference>
<dbReference type="HOGENOM" id="CLU_097103_2_0_6"/>
<dbReference type="OMA" id="MHAVKTR"/>
<dbReference type="OrthoDB" id="7060358at2"/>
<dbReference type="UniPathway" id="UPA00068"/>
<dbReference type="Proteomes" id="UP000000815">
    <property type="component" value="Chromosome"/>
</dbReference>
<dbReference type="Proteomes" id="UP000001019">
    <property type="component" value="Chromosome"/>
</dbReference>
<dbReference type="Proteomes" id="UP000002490">
    <property type="component" value="Chromosome"/>
</dbReference>
<dbReference type="GO" id="GO:0005737">
    <property type="term" value="C:cytoplasm"/>
    <property type="evidence" value="ECO:0007669"/>
    <property type="project" value="UniProtKB-SubCell"/>
</dbReference>
<dbReference type="GO" id="GO:0005667">
    <property type="term" value="C:transcription regulator complex"/>
    <property type="evidence" value="ECO:0000318"/>
    <property type="project" value="GO_Central"/>
</dbReference>
<dbReference type="GO" id="GO:0034618">
    <property type="term" value="F:arginine binding"/>
    <property type="evidence" value="ECO:0007669"/>
    <property type="project" value="InterPro"/>
</dbReference>
<dbReference type="GO" id="GO:0000987">
    <property type="term" value="F:cis-regulatory region sequence-specific DNA binding"/>
    <property type="evidence" value="ECO:0000318"/>
    <property type="project" value="GO_Central"/>
</dbReference>
<dbReference type="GO" id="GO:0003700">
    <property type="term" value="F:DNA-binding transcription factor activity"/>
    <property type="evidence" value="ECO:0007669"/>
    <property type="project" value="UniProtKB-UniRule"/>
</dbReference>
<dbReference type="GO" id="GO:0006526">
    <property type="term" value="P:L-arginine biosynthetic process"/>
    <property type="evidence" value="ECO:0007669"/>
    <property type="project" value="UniProtKB-UniPathway"/>
</dbReference>
<dbReference type="GO" id="GO:0051259">
    <property type="term" value="P:protein complex oligomerization"/>
    <property type="evidence" value="ECO:0007669"/>
    <property type="project" value="InterPro"/>
</dbReference>
<dbReference type="GO" id="GO:1900079">
    <property type="term" value="P:regulation of arginine biosynthetic process"/>
    <property type="evidence" value="ECO:0007669"/>
    <property type="project" value="UniProtKB-UniRule"/>
</dbReference>
<dbReference type="GO" id="GO:0000821">
    <property type="term" value="P:regulation of arginine metabolic process"/>
    <property type="evidence" value="ECO:0000318"/>
    <property type="project" value="GO_Central"/>
</dbReference>
<dbReference type="FunFam" id="1.10.10.10:FF:000074">
    <property type="entry name" value="Arginine repressor"/>
    <property type="match status" value="1"/>
</dbReference>
<dbReference type="FunFam" id="3.30.1360.40:FF:000004">
    <property type="entry name" value="Arginine repressor"/>
    <property type="match status" value="1"/>
</dbReference>
<dbReference type="Gene3D" id="3.30.1360.40">
    <property type="match status" value="1"/>
</dbReference>
<dbReference type="Gene3D" id="1.10.10.10">
    <property type="entry name" value="Winged helix-like DNA-binding domain superfamily/Winged helix DNA-binding domain"/>
    <property type="match status" value="1"/>
</dbReference>
<dbReference type="HAMAP" id="MF_00173">
    <property type="entry name" value="Arg_repressor"/>
    <property type="match status" value="1"/>
</dbReference>
<dbReference type="InterPro" id="IPR001669">
    <property type="entry name" value="Arg_repress"/>
</dbReference>
<dbReference type="InterPro" id="IPR020899">
    <property type="entry name" value="Arg_repress_C"/>
</dbReference>
<dbReference type="InterPro" id="IPR036251">
    <property type="entry name" value="Arg_repress_C_sf"/>
</dbReference>
<dbReference type="InterPro" id="IPR020900">
    <property type="entry name" value="Arg_repress_DNA-bd"/>
</dbReference>
<dbReference type="InterPro" id="IPR036388">
    <property type="entry name" value="WH-like_DNA-bd_sf"/>
</dbReference>
<dbReference type="InterPro" id="IPR036390">
    <property type="entry name" value="WH_DNA-bd_sf"/>
</dbReference>
<dbReference type="NCBIfam" id="TIGR01529">
    <property type="entry name" value="argR_whole"/>
    <property type="match status" value="1"/>
</dbReference>
<dbReference type="NCBIfam" id="NF003457">
    <property type="entry name" value="PRK05066.1"/>
    <property type="match status" value="1"/>
</dbReference>
<dbReference type="PANTHER" id="PTHR34471">
    <property type="entry name" value="ARGININE REPRESSOR"/>
    <property type="match status" value="1"/>
</dbReference>
<dbReference type="PANTHER" id="PTHR34471:SF1">
    <property type="entry name" value="ARGININE REPRESSOR"/>
    <property type="match status" value="1"/>
</dbReference>
<dbReference type="Pfam" id="PF01316">
    <property type="entry name" value="Arg_repressor"/>
    <property type="match status" value="1"/>
</dbReference>
<dbReference type="Pfam" id="PF02863">
    <property type="entry name" value="Arg_repressor_C"/>
    <property type="match status" value="1"/>
</dbReference>
<dbReference type="PRINTS" id="PR01467">
    <property type="entry name" value="ARGREPRESSOR"/>
</dbReference>
<dbReference type="SUPFAM" id="SSF55252">
    <property type="entry name" value="C-terminal domain of arginine repressor"/>
    <property type="match status" value="1"/>
</dbReference>
<dbReference type="SUPFAM" id="SSF46785">
    <property type="entry name" value="Winged helix' DNA-binding domain"/>
    <property type="match status" value="1"/>
</dbReference>
<comment type="function">
    <text evidence="1">Regulates arginine biosynthesis genes.</text>
</comment>
<comment type="pathway">
    <text>Amino-acid biosynthesis; L-arginine biosynthesis [regulation].</text>
</comment>
<comment type="subcellular location">
    <subcellularLocation>
        <location evidence="1">Cytoplasm</location>
    </subcellularLocation>
</comment>
<comment type="similarity">
    <text evidence="1">Belongs to the ArgR family.</text>
</comment>
<keyword id="KW-0028">Amino-acid biosynthesis</keyword>
<keyword id="KW-0055">Arginine biosynthesis</keyword>
<keyword id="KW-0963">Cytoplasm</keyword>
<keyword id="KW-0238">DNA-binding</keyword>
<keyword id="KW-1185">Reference proteome</keyword>
<keyword id="KW-0678">Repressor</keyword>
<keyword id="KW-0804">Transcription</keyword>
<keyword id="KW-0805">Transcription regulation</keyword>
<name>ARGR_YERPE</name>
<accession>Q8ZBA2</accession>
<accession>Q0WBD2</accession>
<organism>
    <name type="scientific">Yersinia pestis</name>
    <dbReference type="NCBI Taxonomy" id="632"/>
    <lineage>
        <taxon>Bacteria</taxon>
        <taxon>Pseudomonadati</taxon>
        <taxon>Pseudomonadota</taxon>
        <taxon>Gammaproteobacteria</taxon>
        <taxon>Enterobacterales</taxon>
        <taxon>Yersiniaceae</taxon>
        <taxon>Yersinia</taxon>
    </lineage>
</organism>
<gene>
    <name evidence="1" type="primary">argR</name>
    <name type="ordered locus">YPO3517</name>
    <name type="ordered locus">y0667</name>
    <name type="ordered locus">YP_0566</name>
</gene>
<protein>
    <recommendedName>
        <fullName evidence="1">Arginine repressor</fullName>
    </recommendedName>
</protein>
<reference key="1">
    <citation type="journal article" date="2001" name="Nature">
        <title>Genome sequence of Yersinia pestis, the causative agent of plague.</title>
        <authorList>
            <person name="Parkhill J."/>
            <person name="Wren B.W."/>
            <person name="Thomson N.R."/>
            <person name="Titball R.W."/>
            <person name="Holden M.T.G."/>
            <person name="Prentice M.B."/>
            <person name="Sebaihia M."/>
            <person name="James K.D."/>
            <person name="Churcher C.M."/>
            <person name="Mungall K.L."/>
            <person name="Baker S."/>
            <person name="Basham D."/>
            <person name="Bentley S.D."/>
            <person name="Brooks K."/>
            <person name="Cerdeno-Tarraga A.-M."/>
            <person name="Chillingworth T."/>
            <person name="Cronin A."/>
            <person name="Davies R.M."/>
            <person name="Davis P."/>
            <person name="Dougan G."/>
            <person name="Feltwell T."/>
            <person name="Hamlin N."/>
            <person name="Holroyd S."/>
            <person name="Jagels K."/>
            <person name="Karlyshev A.V."/>
            <person name="Leather S."/>
            <person name="Moule S."/>
            <person name="Oyston P.C.F."/>
            <person name="Quail M.A."/>
            <person name="Rutherford K.M."/>
            <person name="Simmonds M."/>
            <person name="Skelton J."/>
            <person name="Stevens K."/>
            <person name="Whitehead S."/>
            <person name="Barrell B.G."/>
        </authorList>
    </citation>
    <scope>NUCLEOTIDE SEQUENCE [LARGE SCALE GENOMIC DNA]</scope>
    <source>
        <strain>CO-92 / Biovar Orientalis</strain>
    </source>
</reference>
<reference key="2">
    <citation type="journal article" date="2002" name="J. Bacteriol.">
        <title>Genome sequence of Yersinia pestis KIM.</title>
        <authorList>
            <person name="Deng W."/>
            <person name="Burland V."/>
            <person name="Plunkett G. III"/>
            <person name="Boutin A."/>
            <person name="Mayhew G.F."/>
            <person name="Liss P."/>
            <person name="Perna N.T."/>
            <person name="Rose D.J."/>
            <person name="Mau B."/>
            <person name="Zhou S."/>
            <person name="Schwartz D.C."/>
            <person name="Fetherston J.D."/>
            <person name="Lindler L.E."/>
            <person name="Brubaker R.R."/>
            <person name="Plano G.V."/>
            <person name="Straley S.C."/>
            <person name="McDonough K.A."/>
            <person name="Nilles M.L."/>
            <person name="Matson J.S."/>
            <person name="Blattner F.R."/>
            <person name="Perry R.D."/>
        </authorList>
    </citation>
    <scope>NUCLEOTIDE SEQUENCE [LARGE SCALE GENOMIC DNA]</scope>
    <source>
        <strain>KIM10+ / Biovar Mediaevalis</strain>
    </source>
</reference>
<reference key="3">
    <citation type="journal article" date="2004" name="DNA Res.">
        <title>Complete genome sequence of Yersinia pestis strain 91001, an isolate avirulent to humans.</title>
        <authorList>
            <person name="Song Y."/>
            <person name="Tong Z."/>
            <person name="Wang J."/>
            <person name="Wang L."/>
            <person name="Guo Z."/>
            <person name="Han Y."/>
            <person name="Zhang J."/>
            <person name="Pei D."/>
            <person name="Zhou D."/>
            <person name="Qin H."/>
            <person name="Pang X."/>
            <person name="Han Y."/>
            <person name="Zhai J."/>
            <person name="Li M."/>
            <person name="Cui B."/>
            <person name="Qi Z."/>
            <person name="Jin L."/>
            <person name="Dai R."/>
            <person name="Chen F."/>
            <person name="Li S."/>
            <person name="Ye C."/>
            <person name="Du Z."/>
            <person name="Lin W."/>
            <person name="Wang J."/>
            <person name="Yu J."/>
            <person name="Yang H."/>
            <person name="Wang J."/>
            <person name="Huang P."/>
            <person name="Yang R."/>
        </authorList>
    </citation>
    <scope>NUCLEOTIDE SEQUENCE [LARGE SCALE GENOMIC DNA]</scope>
    <source>
        <strain>91001 / Biovar Mediaevalis</strain>
    </source>
</reference>